<sequence length="115" mass="12338">MSAQGHRLTAPVNSEKVYIVLGLSFALVSITFLLSRNSLPHVGDNIHSLPHGGAYRDGTKAILYNSPNLGSRVSLHNGKNAAFAAVLLLTLLIYGSKYISQRNHTCACGNNHSSH</sequence>
<feature type="chain" id="PRO_0000222588" description="Movement protein TGB2">
    <location>
        <begin position="1"/>
        <end position="115"/>
    </location>
</feature>
<feature type="topological domain" description="Cytoplasmic" evidence="1">
    <location>
        <begin position="1"/>
        <end position="13"/>
    </location>
</feature>
<feature type="transmembrane region" description="Helical" evidence="2">
    <location>
        <begin position="14"/>
        <end position="34"/>
    </location>
</feature>
<feature type="topological domain" description="Lumenal" evidence="1">
    <location>
        <begin position="35"/>
        <end position="74"/>
    </location>
</feature>
<feature type="transmembrane region" description="Helical" evidence="2">
    <location>
        <begin position="75"/>
        <end position="95"/>
    </location>
</feature>
<feature type="topological domain" description="Cytoplasmic" evidence="1">
    <location>
        <begin position="96"/>
        <end position="115"/>
    </location>
</feature>
<evidence type="ECO:0000250" key="1"/>
<evidence type="ECO:0000255" key="2"/>
<evidence type="ECO:0000305" key="3"/>
<keyword id="KW-1038">Host endoplasmic reticulum</keyword>
<keyword id="KW-1043">Host membrane</keyword>
<keyword id="KW-0472">Membrane</keyword>
<keyword id="KW-0812">Transmembrane</keyword>
<keyword id="KW-1133">Transmembrane helix</keyword>
<keyword id="KW-0813">Transport</keyword>
<keyword id="KW-0916">Viral movement protein</keyword>
<name>TGB2_PVX</name>
<gene>
    <name type="ORF">ORF3</name>
</gene>
<proteinExistence type="inferred from homology"/>
<organism>
    <name type="scientific">Potato virus X</name>
    <name type="common">PVX</name>
    <dbReference type="NCBI Taxonomy" id="12183"/>
    <lineage>
        <taxon>Viruses</taxon>
        <taxon>Riboviria</taxon>
        <taxon>Orthornavirae</taxon>
        <taxon>Kitrinoviricota</taxon>
        <taxon>Alsuviricetes</taxon>
        <taxon>Tymovirales</taxon>
        <taxon>Alphaflexiviridae</taxon>
        <taxon>Potexvirus</taxon>
    </lineage>
</organism>
<accession>P0C787</accession>
<accession>P07697</accession>
<reference key="1">
    <citation type="journal article" date="1988" name="Nucleic Acids Res.">
        <title>The nucleotide sequence of potato virus X RNA.</title>
        <authorList>
            <person name="Skryabin K.G."/>
            <person name="Kraev A.S."/>
            <person name="Morozov S.Y."/>
            <person name="Rozanov M.N."/>
            <person name="Chernov B.K."/>
            <person name="Lukasheva L.I."/>
            <person name="Atabekov J.G."/>
        </authorList>
    </citation>
    <scope>NUCLEOTIDE SEQUENCE [GENOMIC RNA]</scope>
</reference>
<reference key="2">
    <citation type="journal article" date="1987" name="FEBS Lett.">
        <title>Nucleotide sequence of the open reading frames adjacent to the coat protein cistron in potato virus X genome.</title>
        <authorList>
            <person name="Morozov S.Y."/>
            <person name="Lukasheva L.I."/>
            <person name="Chernov B.K."/>
            <person name="Skryabin K.G."/>
            <person name="Atabekov J.G."/>
        </authorList>
    </citation>
    <scope>NUCLEOTIDE SEQUENCE [GENOMIC RNA]</scope>
</reference>
<reference key="3">
    <citation type="journal article" date="2005" name="Mol. Plant Microbe Interact.">
        <title>A new cell-to-cell transport model for Potexviruses.</title>
        <authorList>
            <person name="Verchot-Lubicz J."/>
        </authorList>
    </citation>
    <scope>REVIEW</scope>
</reference>
<dbReference type="EMBL" id="M72416">
    <property type="protein sequence ID" value="AAA47169.1"/>
    <property type="molecule type" value="Genomic_RNA"/>
</dbReference>
<dbReference type="RefSeq" id="YP_002332931.1">
    <property type="nucleotide sequence ID" value="NC_011620.1"/>
</dbReference>
<dbReference type="KEGG" id="vg:7065756"/>
<dbReference type="OrthoDB" id="20634at10239"/>
<dbReference type="Proteomes" id="UP000006841">
    <property type="component" value="Genome"/>
</dbReference>
<dbReference type="GO" id="GO:0044167">
    <property type="term" value="C:host cell endoplasmic reticulum membrane"/>
    <property type="evidence" value="ECO:0007669"/>
    <property type="project" value="UniProtKB-SubCell"/>
</dbReference>
<dbReference type="GO" id="GO:0016020">
    <property type="term" value="C:membrane"/>
    <property type="evidence" value="ECO:0007669"/>
    <property type="project" value="UniProtKB-KW"/>
</dbReference>
<dbReference type="GO" id="GO:0046740">
    <property type="term" value="P:transport of virus in host, cell to cell"/>
    <property type="evidence" value="ECO:0007669"/>
    <property type="project" value="UniProtKB-KW"/>
</dbReference>
<dbReference type="InterPro" id="IPR001896">
    <property type="entry name" value="Plant_vir_prot"/>
</dbReference>
<dbReference type="Pfam" id="PF01307">
    <property type="entry name" value="Plant_vir_prot"/>
    <property type="match status" value="1"/>
</dbReference>
<protein>
    <recommendedName>
        <fullName>Movement protein TGB2</fullName>
    </recommendedName>
    <alternativeName>
        <fullName>12 kDa protein</fullName>
    </alternativeName>
    <alternativeName>
        <fullName>Triple gene block 2 protein</fullName>
        <shortName>TGBp2</shortName>
    </alternativeName>
</protein>
<organismHost>
    <name type="scientific">Brassica campestris</name>
    <name type="common">Field mustard</name>
    <dbReference type="NCBI Taxonomy" id="3711"/>
</organismHost>
<organismHost>
    <name type="scientific">Solanum tuberosum</name>
    <name type="common">Potato</name>
    <dbReference type="NCBI Taxonomy" id="4113"/>
</organismHost>
<comment type="function">
    <text evidence="1">Plays a role in viral cell-to-cell propagation, by facilitating genome transport to neighboring plant cells through plasmosdesmata,.</text>
</comment>
<comment type="subcellular location">
    <subcellularLocation>
        <location evidence="1">Host endoplasmic reticulum membrane</location>
    </subcellularLocation>
</comment>
<comment type="miscellaneous">
    <text>TGBp1, TGBp2 and TGBp3 seem to act together for cell-to-cell propagation. TGBp1 is the main movement protein that physically cross the plasmodesma with the viral genome. TGBp2 and TGBp3 would facilitate TGBp1 function.</text>
</comment>
<comment type="similarity">
    <text evidence="3">Belongs to the Tymovirales TGBp2 protein family.</text>
</comment>